<feature type="signal peptide" evidence="1">
    <location>
        <begin position="1"/>
        <end position="20"/>
    </location>
</feature>
<feature type="chain" id="PRO_0000443265" description="T cell receptor alpha variable 12-2" evidence="1">
    <location>
        <begin position="21"/>
        <end position="113"/>
    </location>
</feature>
<feature type="domain" description="Ig-like" evidence="2">
    <location>
        <begin position="23"/>
        <end position="113" status="greater than"/>
    </location>
</feature>
<feature type="glycosylation site" description="N-linked (GlcNAc...) asparagine" evidence="1">
    <location>
        <position position="43"/>
    </location>
</feature>
<feature type="disulfide bond" evidence="3 11 12">
    <location>
        <begin position="44"/>
        <end position="110"/>
    </location>
</feature>
<feature type="non-terminal residue">
    <location>
        <position position="113"/>
    </location>
</feature>
<feature type="strand" evidence="13">
    <location>
        <begin position="25"/>
        <end position="27"/>
    </location>
</feature>
<feature type="strand" evidence="13">
    <location>
        <begin position="32"/>
        <end position="35"/>
    </location>
</feature>
<feature type="strand" evidence="13">
    <location>
        <begin position="40"/>
        <end position="47"/>
    </location>
</feature>
<feature type="strand" evidence="13">
    <location>
        <begin position="54"/>
        <end position="59"/>
    </location>
</feature>
<feature type="strand" evidence="14">
    <location>
        <begin position="61"/>
        <end position="63"/>
    </location>
</feature>
<feature type="strand" evidence="13">
    <location>
        <begin position="66"/>
        <end position="71"/>
    </location>
</feature>
<feature type="strand" evidence="13">
    <location>
        <begin position="73"/>
        <end position="79"/>
    </location>
</feature>
<feature type="strand" evidence="13">
    <location>
        <begin position="82"/>
        <end position="87"/>
    </location>
</feature>
<feature type="turn" evidence="13">
    <location>
        <begin position="88"/>
        <end position="91"/>
    </location>
</feature>
<feature type="strand" evidence="13">
    <location>
        <begin position="92"/>
        <end position="97"/>
    </location>
</feature>
<feature type="helix" evidence="13">
    <location>
        <begin position="102"/>
        <end position="104"/>
    </location>
</feature>
<feature type="strand" evidence="13">
    <location>
        <begin position="106"/>
        <end position="112"/>
    </location>
</feature>
<gene>
    <name evidence="9" type="primary">TRAV12-2</name>
</gene>
<accession>A0A075B6T6</accession>
<organism>
    <name type="scientific">Homo sapiens</name>
    <name type="common">Human</name>
    <dbReference type="NCBI Taxonomy" id="9606"/>
    <lineage>
        <taxon>Eukaryota</taxon>
        <taxon>Metazoa</taxon>
        <taxon>Chordata</taxon>
        <taxon>Craniata</taxon>
        <taxon>Vertebrata</taxon>
        <taxon>Euteleostomi</taxon>
        <taxon>Mammalia</taxon>
        <taxon>Eutheria</taxon>
        <taxon>Euarchontoglires</taxon>
        <taxon>Primates</taxon>
        <taxon>Haplorrhini</taxon>
        <taxon>Catarrhini</taxon>
        <taxon>Hominidae</taxon>
        <taxon>Homo</taxon>
    </lineage>
</organism>
<sequence length="113" mass="12838">MKSLRVLLVILWLQLSWVWSQQKEVEQNSGPLSVPEGAIASLNCTYSDRGSQSFFWYRQYSGKSPELIMFIYSNGDKEDGRFTAQLNKASQYVSLLIRDSQPSDSATYLCAVN</sequence>
<dbReference type="EMBL" id="AC243980">
    <property type="status" value="NOT_ANNOTATED_CDS"/>
    <property type="molecule type" value="Genomic_DNA"/>
</dbReference>
<dbReference type="PDB" id="1AO7">
    <property type="method" value="X-ray"/>
    <property type="resolution" value="2.60 A"/>
    <property type="chains" value="D=23-112"/>
</dbReference>
<dbReference type="PDB" id="4ZDH">
    <property type="method" value="X-ray"/>
    <property type="resolution" value="2.10 A"/>
    <property type="chains" value="A=24-112"/>
</dbReference>
<dbReference type="PDB" id="5E9D">
    <property type="method" value="X-ray"/>
    <property type="resolution" value="2.51 A"/>
    <property type="chains" value="D/I=22-112"/>
</dbReference>
<dbReference type="PDB" id="5NHT">
    <property type="method" value="X-ray"/>
    <property type="resolution" value="3.20 A"/>
    <property type="chains" value="A=21-112"/>
</dbReference>
<dbReference type="PDB" id="6DKP">
    <property type="method" value="X-ray"/>
    <property type="resolution" value="2.97 A"/>
    <property type="chains" value="D=22-113"/>
</dbReference>
<dbReference type="PDB" id="8RLT">
    <property type="method" value="X-ray"/>
    <property type="resolution" value="2.25 A"/>
    <property type="chains" value="D/I=23-112"/>
</dbReference>
<dbReference type="PDB" id="8RLU">
    <property type="method" value="X-ray"/>
    <property type="resolution" value="2.35 A"/>
    <property type="chains" value="D/I=23-112"/>
</dbReference>
<dbReference type="PDB" id="8RLV">
    <property type="method" value="X-ray"/>
    <property type="resolution" value="2.61 A"/>
    <property type="chains" value="D/I=23-112"/>
</dbReference>
<dbReference type="PDBsum" id="1AO7"/>
<dbReference type="PDBsum" id="4ZDH"/>
<dbReference type="PDBsum" id="5E9D"/>
<dbReference type="PDBsum" id="5NHT"/>
<dbReference type="PDBsum" id="6DKP"/>
<dbReference type="PDBsum" id="8RLT"/>
<dbReference type="PDBsum" id="8RLU"/>
<dbReference type="PDBsum" id="8RLV"/>
<dbReference type="SMR" id="A0A075B6T6"/>
<dbReference type="FunCoup" id="A0A075B6T6">
    <property type="interactions" value="338"/>
</dbReference>
<dbReference type="IMGT_GENE-DB" id="TRAV12-2"/>
<dbReference type="GlyCosmos" id="A0A075B6T6">
    <property type="glycosylation" value="1 site, No reported glycans"/>
</dbReference>
<dbReference type="GlyGen" id="A0A075B6T6">
    <property type="glycosylation" value="1 site"/>
</dbReference>
<dbReference type="BioMuta" id="TRAV12-2"/>
<dbReference type="MassIVE" id="A0A075B6T6"/>
<dbReference type="Ensembl" id="ENST00000390437.2">
    <property type="protein sequence ID" value="ENSP00000437362.1"/>
    <property type="gene ID" value="ENSG00000211789.2"/>
</dbReference>
<dbReference type="UCSC" id="uc058zdt.1">
    <property type="organism name" value="human"/>
</dbReference>
<dbReference type="AGR" id="HGNC:12106"/>
<dbReference type="GeneCards" id="TRAV12-2"/>
<dbReference type="HGNC" id="HGNC:12106">
    <property type="gene designation" value="TRAV12-2"/>
</dbReference>
<dbReference type="HPA" id="ENSG00000211789">
    <property type="expression patterns" value="Tissue enriched (lymphoid)"/>
</dbReference>
<dbReference type="neXtProt" id="NX_A0A075B6T6"/>
<dbReference type="OpenTargets" id="ENSG00000211789"/>
<dbReference type="VEuPathDB" id="HostDB:ENSG00000211789"/>
<dbReference type="GeneTree" id="ENSGT00940000153130"/>
<dbReference type="HOGENOM" id="CLU_077975_8_3_1"/>
<dbReference type="InParanoid" id="A0A075B6T6"/>
<dbReference type="OMA" id="QYSEKGP"/>
<dbReference type="OrthoDB" id="9631130at2759"/>
<dbReference type="PAN-GO" id="A0A075B6T6">
    <property type="GO annotations" value="1 GO annotation based on evolutionary models"/>
</dbReference>
<dbReference type="PhylomeDB" id="A0A075B6T6"/>
<dbReference type="PathwayCommons" id="A0A075B6T6"/>
<dbReference type="SignaLink" id="A0A075B6T6"/>
<dbReference type="ChiTaRS" id="TRAV12-2">
    <property type="organism name" value="human"/>
</dbReference>
<dbReference type="EvolutionaryTrace" id="A0A075B6T6"/>
<dbReference type="Pharos" id="A0A075B6T6">
    <property type="development level" value="Tdark"/>
</dbReference>
<dbReference type="PRO" id="PR:A0A075B6T6"/>
<dbReference type="Proteomes" id="UP000005640">
    <property type="component" value="Chromosome 14"/>
</dbReference>
<dbReference type="RNAct" id="A0A075B6T6">
    <property type="molecule type" value="protein"/>
</dbReference>
<dbReference type="Bgee" id="ENSG00000211789">
    <property type="expression patterns" value="Expressed in granulocyte and 95 other cell types or tissues"/>
</dbReference>
<dbReference type="GO" id="GO:0042101">
    <property type="term" value="C:T cell receptor complex"/>
    <property type="evidence" value="ECO:0007669"/>
    <property type="project" value="UniProtKB-KW"/>
</dbReference>
<dbReference type="GO" id="GO:0042605">
    <property type="term" value="F:peptide antigen binding"/>
    <property type="evidence" value="ECO:0000318"/>
    <property type="project" value="GO_Central"/>
</dbReference>
<dbReference type="GO" id="GO:0002250">
    <property type="term" value="P:adaptive immune response"/>
    <property type="evidence" value="ECO:0007669"/>
    <property type="project" value="UniProtKB-KW"/>
</dbReference>
<dbReference type="CDD" id="cd04983">
    <property type="entry name" value="IgV_TCR_alpha"/>
    <property type="match status" value="1"/>
</dbReference>
<dbReference type="Gene3D" id="2.60.40.10">
    <property type="entry name" value="Immunoglobulins"/>
    <property type="match status" value="1"/>
</dbReference>
<dbReference type="InterPro" id="IPR007110">
    <property type="entry name" value="Ig-like_dom"/>
</dbReference>
<dbReference type="InterPro" id="IPR036179">
    <property type="entry name" value="Ig-like_dom_sf"/>
</dbReference>
<dbReference type="InterPro" id="IPR013783">
    <property type="entry name" value="Ig-like_fold"/>
</dbReference>
<dbReference type="InterPro" id="IPR013106">
    <property type="entry name" value="Ig_V-set"/>
</dbReference>
<dbReference type="InterPro" id="IPR051006">
    <property type="entry name" value="TCR_variable_domain"/>
</dbReference>
<dbReference type="PANTHER" id="PTHR19343">
    <property type="entry name" value="T CELL RECEPTOR ALPHA VARIABLE 1-2"/>
    <property type="match status" value="1"/>
</dbReference>
<dbReference type="PANTHER" id="PTHR19343:SF3">
    <property type="entry name" value="T CELL RECEPTOR ALPHA VARIABLE 12-2"/>
    <property type="match status" value="1"/>
</dbReference>
<dbReference type="Pfam" id="PF07686">
    <property type="entry name" value="V-set"/>
    <property type="match status" value="1"/>
</dbReference>
<dbReference type="SMART" id="SM00406">
    <property type="entry name" value="IGv"/>
    <property type="match status" value="1"/>
</dbReference>
<dbReference type="SUPFAM" id="SSF48726">
    <property type="entry name" value="Immunoglobulin"/>
    <property type="match status" value="1"/>
</dbReference>
<dbReference type="PROSITE" id="PS50835">
    <property type="entry name" value="IG_LIKE"/>
    <property type="match status" value="1"/>
</dbReference>
<reference key="1">
    <citation type="journal article" date="2003" name="Nature">
        <title>The DNA sequence and analysis of human chromosome 14.</title>
        <authorList>
            <person name="Heilig R."/>
            <person name="Eckenberg R."/>
            <person name="Petit J.-L."/>
            <person name="Fonknechten N."/>
            <person name="Da Silva C."/>
            <person name="Cattolico L."/>
            <person name="Levy M."/>
            <person name="Barbe V."/>
            <person name="De Berardinis V."/>
            <person name="Ureta-Vidal A."/>
            <person name="Pelletier E."/>
            <person name="Vico V."/>
            <person name="Anthouard V."/>
            <person name="Rowen L."/>
            <person name="Madan A."/>
            <person name="Qin S."/>
            <person name="Sun H."/>
            <person name="Du H."/>
            <person name="Pepin K."/>
            <person name="Artiguenave F."/>
            <person name="Robert C."/>
            <person name="Cruaud C."/>
            <person name="Bruels T."/>
            <person name="Jaillon O."/>
            <person name="Friedlander L."/>
            <person name="Samson G."/>
            <person name="Brottier P."/>
            <person name="Cure S."/>
            <person name="Segurens B."/>
            <person name="Aniere F."/>
            <person name="Samain S."/>
            <person name="Crespeau H."/>
            <person name="Abbasi N."/>
            <person name="Aiach N."/>
            <person name="Boscus D."/>
            <person name="Dickhoff R."/>
            <person name="Dors M."/>
            <person name="Dubois I."/>
            <person name="Friedman C."/>
            <person name="Gouyvenoux M."/>
            <person name="James R."/>
            <person name="Madan A."/>
            <person name="Mairey-Estrada B."/>
            <person name="Mangenot S."/>
            <person name="Martins N."/>
            <person name="Menard M."/>
            <person name="Oztas S."/>
            <person name="Ratcliffe A."/>
            <person name="Shaffer T."/>
            <person name="Trask B."/>
            <person name="Vacherie B."/>
            <person name="Bellemere C."/>
            <person name="Belser C."/>
            <person name="Besnard-Gonnet M."/>
            <person name="Bartol-Mavel D."/>
            <person name="Boutard M."/>
            <person name="Briez-Silla S."/>
            <person name="Combette S."/>
            <person name="Dufosse-Laurent V."/>
            <person name="Ferron C."/>
            <person name="Lechaplais C."/>
            <person name="Louesse C."/>
            <person name="Muselet D."/>
            <person name="Magdelenat G."/>
            <person name="Pateau E."/>
            <person name="Petit E."/>
            <person name="Sirvain-Trukniewicz P."/>
            <person name="Trybou A."/>
            <person name="Vega-Czarny N."/>
            <person name="Bataille E."/>
            <person name="Bluet E."/>
            <person name="Bordelais I."/>
            <person name="Dubois M."/>
            <person name="Dumont C."/>
            <person name="Guerin T."/>
            <person name="Haffray S."/>
            <person name="Hammadi R."/>
            <person name="Muanga J."/>
            <person name="Pellouin V."/>
            <person name="Robert D."/>
            <person name="Wunderle E."/>
            <person name="Gauguet G."/>
            <person name="Roy A."/>
            <person name="Sainte-Marthe L."/>
            <person name="Verdier J."/>
            <person name="Verdier-Discala C."/>
            <person name="Hillier L.W."/>
            <person name="Fulton L."/>
            <person name="McPherson J."/>
            <person name="Matsuda F."/>
            <person name="Wilson R."/>
            <person name="Scarpelli C."/>
            <person name="Gyapay G."/>
            <person name="Wincker P."/>
            <person name="Saurin W."/>
            <person name="Quetier F."/>
            <person name="Waterston R."/>
            <person name="Hood L."/>
            <person name="Weissenbach J."/>
        </authorList>
    </citation>
    <scope>NUCLEOTIDE SEQUENCE [LARGE SCALE GENOMIC DNA] (IMGT ALLELE TRAV12-2*01)</scope>
</reference>
<reference key="2">
    <citation type="book" date="2001" name="The T Cell Receptor FactsBook.">
        <title>The T Cell Receptor FactsBook.</title>
        <editorList>
            <person name="Lefranc M.P."/>
            <person name="Lefranc G."/>
        </editorList>
        <authorList>
            <person name="Lefranc M.P."/>
            <person name="Lefranc G."/>
        </authorList>
    </citation>
    <scope>NOMENCLATURE</scope>
</reference>
<reference key="3">
    <citation type="journal article" date="2004" name="Nat. Rev. Immunol.">
        <title>The many important facets of T-cell repertoire diversity.</title>
        <authorList>
            <person name="Nikolich-Zugich J."/>
            <person name="Slifka M.K."/>
            <person name="Messaoudi I."/>
        </authorList>
    </citation>
    <scope>REVIEW ON T CELL REPERTOIRE DIVERSITY</scope>
</reference>
<reference key="4">
    <citation type="journal article" date="2010" name="Cold Spring Harb. Perspect. Biol.">
        <title>Structural biology of the T-cell receptor: insights into receptor assembly, ligand recognition, and initiation of signaling.</title>
        <authorList>
            <person name="Wucherpfennig K.W."/>
            <person name="Gagnon E."/>
            <person name="Call M.J."/>
            <person name="Huseby E.S."/>
            <person name="Call M.E."/>
        </authorList>
    </citation>
    <scope>REVIEW ON T CELL RECEPTOR-CD3 COMPLEX ASSEMBLY</scope>
    <scope>SUBCELLULAR LOCATION</scope>
</reference>
<reference key="5">
    <citation type="journal article" date="2013" name="Nat. Rev. Immunol.">
        <title>T cell receptor signalling networks: branched, diversified and bounded.</title>
        <authorList>
            <person name="Brownlie R.J."/>
            <person name="Zamoyska R."/>
        </authorList>
    </citation>
    <scope>REVIEW ON T CELL RECEPTOR SIGNALING</scope>
</reference>
<reference key="6">
    <citation type="journal article" date="2014" name="Front. Immunol.">
        <title>Immunoglobulin and T Cell Receptor Genes: IMGT((R)) and the Birth and Rise of Immunoinformatics.</title>
        <authorList>
            <person name="Lefranc M.P."/>
        </authorList>
    </citation>
    <scope>NOMENCLATURE</scope>
</reference>
<reference key="7">
    <citation type="journal article" date="2015" name="Annu. Rev. Immunol.">
        <title>T cell antigen receptor recognition of antigen-presenting molecules.</title>
        <authorList>
            <person name="Rossjohn J."/>
            <person name="Gras S."/>
            <person name="Miles J.J."/>
            <person name="Turner S.J."/>
            <person name="Godfrey D.I."/>
            <person name="McCluskey J."/>
        </authorList>
    </citation>
    <scope>REVIEW ON FUNCTION</scope>
</reference>
<reference evidence="11" key="8">
    <citation type="journal article" date="1996" name="Nature">
        <title>Structure of the complex between human T-cell receptor, viral peptide and HLA-A2.</title>
        <authorList>
            <person name="Garboczi D.N."/>
            <person name="Ghosh P."/>
            <person name="Utz U."/>
            <person name="Fan Q.R."/>
            <person name="Biddison W.E."/>
            <person name="Wiley D.C."/>
        </authorList>
    </citation>
    <scope>X-RAY CRYSTALLOGRAPHY (2.60 ANGSTROMS) OF 23-112</scope>
    <scope>DISULFIDE BONDS</scope>
</reference>
<reference evidence="12" key="9">
    <citation type="submission" date="2015-04" db="PDB data bank">
        <title>Crystal structure of JKA6 TCR.</title>
        <authorList>
            <person name="Singh N.K."/>
            <person name="Hossain M."/>
            <person name="Baker B.M."/>
        </authorList>
    </citation>
    <scope>X-RAY CRYSTALLOGRAPHY (2.10 ANGSTROMS) OF 24-112</scope>
    <scope>DISULFIDE BONDS</scope>
</reference>
<evidence type="ECO:0000255" key="1"/>
<evidence type="ECO:0000255" key="2">
    <source>
        <dbReference type="PROSITE-ProRule" id="PRU00114"/>
    </source>
</evidence>
<evidence type="ECO:0000269" key="3">
    <source>
    </source>
</evidence>
<evidence type="ECO:0000303" key="4">
    <source>
    </source>
</evidence>
<evidence type="ECO:0000303" key="5">
    <source>
    </source>
</evidence>
<evidence type="ECO:0000303" key="6">
    <source>
    </source>
</evidence>
<evidence type="ECO:0000303" key="7">
    <source>
    </source>
</evidence>
<evidence type="ECO:0000303" key="8">
    <source>
    </source>
</evidence>
<evidence type="ECO:0000303" key="9">
    <source ref="2"/>
</evidence>
<evidence type="ECO:0000305" key="10"/>
<evidence type="ECO:0007744" key="11">
    <source>
        <dbReference type="PDB" id="1AO7"/>
    </source>
</evidence>
<evidence type="ECO:0007744" key="12">
    <source>
        <dbReference type="PDB" id="4ZDH"/>
    </source>
</evidence>
<evidence type="ECO:0007829" key="13">
    <source>
        <dbReference type="PDB" id="4ZDH"/>
    </source>
</evidence>
<evidence type="ECO:0007829" key="14">
    <source>
        <dbReference type="PDB" id="8RLU"/>
    </source>
</evidence>
<keyword id="KW-0002">3D-structure</keyword>
<keyword id="KW-1064">Adaptive immunity</keyword>
<keyword id="KW-1003">Cell membrane</keyword>
<keyword id="KW-1015">Disulfide bond</keyword>
<keyword id="KW-0325">Glycoprotein</keyword>
<keyword id="KW-0391">Immunity</keyword>
<keyword id="KW-0393">Immunoglobulin domain</keyword>
<keyword id="KW-0472">Membrane</keyword>
<keyword id="KW-1267">Proteomics identification</keyword>
<keyword id="KW-0675">Receptor</keyword>
<keyword id="KW-1185">Reference proteome</keyword>
<keyword id="KW-0732">Signal</keyword>
<keyword id="KW-1279">T cell receptor</keyword>
<comment type="function">
    <text evidence="4 6 7 8">V region of the variable domain of T cell receptor (TR) alpha chain that participates in the antigen recognition (PubMed:24600447). Alpha-beta T cell receptors are antigen specific receptors which are essential to the immune response and are present on the cell surface of T lymphocytes. Recognize peptide-major histocompatibility (MH) (pMH) complexes that are displayed by antigen presenting cells (APC), a prerequisite for efficient T cell adaptive immunity against pathogens (PubMed:25493333). Binding of alpha-beta TR to pMH complex initiates TR-CD3 clustering on the cell surface and intracellular activation of LCK that phosphorylates the ITAM motifs of CD3G, CD3D, CD3E and CD247 enabling the recruitment of ZAP70. In turn ZAP70 phosphorylates LAT, which recruits numerous signaling molecules to form the LAT signalosome. The LAT signalosome propagates signal branching to three major signaling pathways, the calcium, the mitogen-activated protein kinase (MAPK) kinase and the nuclear factor NF-kappa-B (NF-kB) pathways, leading to the mobilization of transcription factors that are critical for gene expression and essential for T cell growth and differentiation (PubMed:23524462). The T cell repertoire is generated in the thymus, by V-(D)-J rearrangement. This repertoire is then shaped by intrathymic selection events to generate a peripheral T cell pool of self-MH restricted, non-autoaggressive T cells. Post-thymic interaction of alpha-beta TR with the pMH complexes shapes TR structural and functional avidity (PubMed:15040585).</text>
</comment>
<comment type="subunit">
    <text evidence="5">Alpha-beta TR is a heterodimer composed of an alpha and beta chain; disulfide-linked. The alpha-beta TR is associated with the transmembrane signaling CD3 coreceptor proteins to form the TR-CD3 (TcR or TCR). The assembly of alpha-beta TR heterodimers with CD3 occurs in the endoplasmic reticulum where a single alpha-beta TR heterodimer associates with one CD3D-CD3E heterodimer, one CD3G-CD3E heterodimer and one CD247 homodimer forming a stable octameric structure. CD3D-CD3E and CD3G-CD3E heterodimers preferentially associate with TR alpha and TR beta chains, respectively. The association of the CD247 homodimer is the last step of TcR assembly in the endoplasmic reticulum and is required for transport to the cell surface.</text>
</comment>
<comment type="subcellular location">
    <subcellularLocation>
        <location evidence="5">Cell membrane</location>
    </subcellularLocation>
</comment>
<comment type="polymorphism">
    <text evidence="10">There are several alleles. The sequence shown is that of IMGT allele TRAV12-2*01.</text>
</comment>
<name>TVAL2_HUMAN</name>
<protein>
    <recommendedName>
        <fullName evidence="9">T cell receptor alpha variable 12-2</fullName>
    </recommendedName>
</protein>
<proteinExistence type="evidence at protein level"/>